<feature type="signal peptide" evidence="2">
    <location>
        <begin position="1" status="less than"/>
        <end position="11"/>
    </location>
</feature>
<feature type="propeptide" id="PRO_0000006841" evidence="1">
    <location>
        <begin position="12"/>
        <end position="50"/>
    </location>
</feature>
<feature type="peptide" id="PRO_0000006842" description="Alpha-defensin 14">
    <location>
        <begin position="51"/>
        <end position="85"/>
    </location>
</feature>
<feature type="region of interest" description="Disordered" evidence="3">
    <location>
        <begin position="13"/>
        <end position="48"/>
    </location>
</feature>
<feature type="disulfide bond" evidence="1">
    <location>
        <begin position="56"/>
        <end position="84"/>
    </location>
</feature>
<feature type="disulfide bond" evidence="1">
    <location>
        <begin position="58"/>
        <end position="73"/>
    </location>
</feature>
<feature type="disulfide bond" evidence="1">
    <location>
        <begin position="63"/>
        <end position="83"/>
    </location>
</feature>
<feature type="non-terminal residue">
    <location>
        <position position="1"/>
    </location>
</feature>
<feature type="strand" evidence="5">
    <location>
        <begin position="55"/>
        <end position="61"/>
    </location>
</feature>
<feature type="strand" evidence="5">
    <location>
        <begin position="68"/>
        <end position="75"/>
    </location>
</feature>
<feature type="strand" evidence="5">
    <location>
        <begin position="78"/>
        <end position="85"/>
    </location>
</feature>
<gene>
    <name type="primary">Defa14</name>
    <name type="synonym">Defcr14</name>
</gene>
<organism>
    <name type="scientific">Mus musculus</name>
    <name type="common">Mouse</name>
    <dbReference type="NCBI Taxonomy" id="10090"/>
    <lineage>
        <taxon>Eukaryota</taxon>
        <taxon>Metazoa</taxon>
        <taxon>Chordata</taxon>
        <taxon>Craniata</taxon>
        <taxon>Vertebrata</taxon>
        <taxon>Euteleostomi</taxon>
        <taxon>Mammalia</taxon>
        <taxon>Eutheria</taxon>
        <taxon>Euarchontoglires</taxon>
        <taxon>Glires</taxon>
        <taxon>Rodentia</taxon>
        <taxon>Myomorpha</taxon>
        <taxon>Muroidea</taxon>
        <taxon>Muridae</taxon>
        <taxon>Murinae</taxon>
        <taxon>Mus</taxon>
        <taxon>Mus</taxon>
    </lineage>
</organism>
<accession>P50712</accession>
<sequence length="85" mass="9589">ALVLLAFQVQADPIQNTDEETKTEEQPGEDDQAVSVSFGDPEGSSLQEESLRDLVCYCRTRGCKRRERMNGTCRKGHLMHTLCCR</sequence>
<proteinExistence type="evidence at protein level"/>
<dbReference type="EMBL" id="U03067">
    <property type="protein sequence ID" value="AAA03714.1"/>
    <property type="molecule type" value="mRNA"/>
</dbReference>
<dbReference type="PDB" id="7YOA">
    <property type="method" value="X-ray"/>
    <property type="resolution" value="1.67 A"/>
    <property type="chains" value="A/B=51-85"/>
</dbReference>
<dbReference type="PDBsum" id="7YOA"/>
<dbReference type="SMR" id="P50712"/>
<dbReference type="FunCoup" id="P50712">
    <property type="interactions" value="42"/>
</dbReference>
<dbReference type="iPTMnet" id="P50712"/>
<dbReference type="PhosphoSitePlus" id="P50712"/>
<dbReference type="AGR" id="MGI:99587"/>
<dbReference type="MGI" id="MGI:99587">
    <property type="gene designation" value="Defa14"/>
</dbReference>
<dbReference type="InParanoid" id="P50712"/>
<dbReference type="Proteomes" id="UP000000589">
    <property type="component" value="Unplaced"/>
</dbReference>
<dbReference type="RNAct" id="P50712">
    <property type="molecule type" value="protein"/>
</dbReference>
<dbReference type="GO" id="GO:0005615">
    <property type="term" value="C:extracellular space"/>
    <property type="evidence" value="ECO:0007669"/>
    <property type="project" value="InterPro"/>
</dbReference>
<dbReference type="GO" id="GO:0042742">
    <property type="term" value="P:defense response to bacterium"/>
    <property type="evidence" value="ECO:0007669"/>
    <property type="project" value="UniProtKB-KW"/>
</dbReference>
<dbReference type="InterPro" id="IPR016327">
    <property type="entry name" value="Alpha-defensin"/>
</dbReference>
<dbReference type="InterPro" id="IPR006081">
    <property type="entry name" value="Alpha-defensin_C"/>
</dbReference>
<dbReference type="InterPro" id="IPR002366">
    <property type="entry name" value="Alpha-defensin_N"/>
</dbReference>
<dbReference type="InterPro" id="IPR006080">
    <property type="entry name" value="Beta/alpha-defensin_C"/>
</dbReference>
<dbReference type="PANTHER" id="PTHR11876">
    <property type="entry name" value="ALPHA-DEFENSIN 1"/>
    <property type="match status" value="1"/>
</dbReference>
<dbReference type="PANTHER" id="PTHR11876:SF2">
    <property type="entry name" value="ALPHA-DEFENSIN 1-RELATED"/>
    <property type="match status" value="1"/>
</dbReference>
<dbReference type="Pfam" id="PF00323">
    <property type="entry name" value="Defensin_1"/>
    <property type="match status" value="1"/>
</dbReference>
<dbReference type="Pfam" id="PF00879">
    <property type="entry name" value="Defensin_propep"/>
    <property type="match status" value="1"/>
</dbReference>
<dbReference type="PIRSF" id="PIRSF001875">
    <property type="entry name" value="Alpha-defensin"/>
    <property type="match status" value="1"/>
</dbReference>
<dbReference type="SMART" id="SM01418">
    <property type="entry name" value="Defensin_propep"/>
    <property type="match status" value="1"/>
</dbReference>
<dbReference type="SMART" id="SM00048">
    <property type="entry name" value="DEFSN"/>
    <property type="match status" value="1"/>
</dbReference>
<dbReference type="SUPFAM" id="SSF57392">
    <property type="entry name" value="Defensin-like"/>
    <property type="match status" value="1"/>
</dbReference>
<dbReference type="PROSITE" id="PS00269">
    <property type="entry name" value="DEFENSIN"/>
    <property type="match status" value="1"/>
</dbReference>
<evidence type="ECO:0000250" key="1"/>
<evidence type="ECO:0000255" key="2"/>
<evidence type="ECO:0000256" key="3">
    <source>
        <dbReference type="SAM" id="MobiDB-lite"/>
    </source>
</evidence>
<evidence type="ECO:0000305" key="4"/>
<evidence type="ECO:0007829" key="5">
    <source>
        <dbReference type="PDB" id="7YOA"/>
    </source>
</evidence>
<reference key="1">
    <citation type="journal article" date="1994" name="Infect. Immun.">
        <title>Mouse Paneth cell defensins: primary structures and antibacterial activities of numerous cryptdin isoforms.</title>
        <authorList>
            <person name="Ouellette A.J."/>
            <person name="Hsieh M.M."/>
            <person name="Nosek M.T."/>
            <person name="Cano-Gauci D.F."/>
            <person name="Huttner K.M."/>
            <person name="Buick R.N."/>
            <person name="Selsted M.E."/>
        </authorList>
    </citation>
    <scope>NUCLEOTIDE SEQUENCE [MRNA]</scope>
    <source>
        <strain>CD-1</strain>
        <tissue>Intestinal crypt</tissue>
    </source>
</reference>
<reference key="2">
    <citation type="journal article" date="1994" name="Genomics">
        <title>Structure and diversity of the murine cryptdin gene family.</title>
        <authorList>
            <person name="Huttner K.M."/>
            <person name="Selsted M.E."/>
            <person name="Ouellette A.J."/>
        </authorList>
    </citation>
    <scope>NUCLEOTIDE SEQUENCE [MRNA] OF 51-85</scope>
    <source>
        <strain>129/SvJ</strain>
        <strain>C3H/HeJ</strain>
        <tissue>Small intestine</tissue>
    </source>
</reference>
<name>DFA14_MOUSE</name>
<protein>
    <recommendedName>
        <fullName>Alpha-defensin 14</fullName>
    </recommendedName>
    <alternativeName>
        <fullName>Defensin-related cryptdin-14</fullName>
    </alternativeName>
</protein>
<comment type="function">
    <text>Probably contributes to the antimicrobial barrier function of the small bowel mucosa.</text>
</comment>
<comment type="subcellular location">
    <subcellularLocation>
        <location>Secreted</location>
    </subcellularLocation>
</comment>
<comment type="tissue specificity">
    <text>Paneth cells of the small bowel.</text>
</comment>
<comment type="similarity">
    <text evidence="4">Belongs to the alpha-defensin family.</text>
</comment>
<keyword id="KW-0002">3D-structure</keyword>
<keyword id="KW-0044">Antibiotic</keyword>
<keyword id="KW-0929">Antimicrobial</keyword>
<keyword id="KW-0211">Defensin</keyword>
<keyword id="KW-1015">Disulfide bond</keyword>
<keyword id="KW-1185">Reference proteome</keyword>
<keyword id="KW-0964">Secreted</keyword>
<keyword id="KW-0732">Signal</keyword>